<proteinExistence type="inferred from homology"/>
<accession>Q1RK09</accession>
<dbReference type="EMBL" id="CP000087">
    <property type="protein sequence ID" value="ABE04305.1"/>
    <property type="molecule type" value="Genomic_DNA"/>
</dbReference>
<dbReference type="RefSeq" id="WP_011476918.1">
    <property type="nucleotide sequence ID" value="NC_007940.1"/>
</dbReference>
<dbReference type="SMR" id="Q1RK09"/>
<dbReference type="KEGG" id="rbe:RBE_0224"/>
<dbReference type="eggNOG" id="COG0102">
    <property type="taxonomic scope" value="Bacteria"/>
</dbReference>
<dbReference type="HOGENOM" id="CLU_082184_2_0_5"/>
<dbReference type="OrthoDB" id="9801330at2"/>
<dbReference type="Proteomes" id="UP000001951">
    <property type="component" value="Chromosome"/>
</dbReference>
<dbReference type="GO" id="GO:0022625">
    <property type="term" value="C:cytosolic large ribosomal subunit"/>
    <property type="evidence" value="ECO:0007669"/>
    <property type="project" value="TreeGrafter"/>
</dbReference>
<dbReference type="GO" id="GO:0003729">
    <property type="term" value="F:mRNA binding"/>
    <property type="evidence" value="ECO:0007669"/>
    <property type="project" value="TreeGrafter"/>
</dbReference>
<dbReference type="GO" id="GO:0003735">
    <property type="term" value="F:structural constituent of ribosome"/>
    <property type="evidence" value="ECO:0007669"/>
    <property type="project" value="InterPro"/>
</dbReference>
<dbReference type="GO" id="GO:0017148">
    <property type="term" value="P:negative regulation of translation"/>
    <property type="evidence" value="ECO:0007669"/>
    <property type="project" value="TreeGrafter"/>
</dbReference>
<dbReference type="GO" id="GO:0006412">
    <property type="term" value="P:translation"/>
    <property type="evidence" value="ECO:0007669"/>
    <property type="project" value="UniProtKB-UniRule"/>
</dbReference>
<dbReference type="CDD" id="cd00392">
    <property type="entry name" value="Ribosomal_L13"/>
    <property type="match status" value="1"/>
</dbReference>
<dbReference type="Gene3D" id="3.90.1180.10">
    <property type="entry name" value="Ribosomal protein L13"/>
    <property type="match status" value="1"/>
</dbReference>
<dbReference type="HAMAP" id="MF_01366">
    <property type="entry name" value="Ribosomal_uL13"/>
    <property type="match status" value="1"/>
</dbReference>
<dbReference type="InterPro" id="IPR005822">
    <property type="entry name" value="Ribosomal_uL13"/>
</dbReference>
<dbReference type="InterPro" id="IPR005823">
    <property type="entry name" value="Ribosomal_uL13_bac-type"/>
</dbReference>
<dbReference type="InterPro" id="IPR023563">
    <property type="entry name" value="Ribosomal_uL13_CS"/>
</dbReference>
<dbReference type="InterPro" id="IPR036899">
    <property type="entry name" value="Ribosomal_uL13_sf"/>
</dbReference>
<dbReference type="NCBIfam" id="TIGR01066">
    <property type="entry name" value="rplM_bact"/>
    <property type="match status" value="1"/>
</dbReference>
<dbReference type="PANTHER" id="PTHR11545:SF2">
    <property type="entry name" value="LARGE RIBOSOMAL SUBUNIT PROTEIN UL13M"/>
    <property type="match status" value="1"/>
</dbReference>
<dbReference type="PANTHER" id="PTHR11545">
    <property type="entry name" value="RIBOSOMAL PROTEIN L13"/>
    <property type="match status" value="1"/>
</dbReference>
<dbReference type="Pfam" id="PF00572">
    <property type="entry name" value="Ribosomal_L13"/>
    <property type="match status" value="1"/>
</dbReference>
<dbReference type="PIRSF" id="PIRSF002181">
    <property type="entry name" value="Ribosomal_L13"/>
    <property type="match status" value="1"/>
</dbReference>
<dbReference type="SUPFAM" id="SSF52161">
    <property type="entry name" value="Ribosomal protein L13"/>
    <property type="match status" value="1"/>
</dbReference>
<dbReference type="PROSITE" id="PS00783">
    <property type="entry name" value="RIBOSOMAL_L13"/>
    <property type="match status" value="1"/>
</dbReference>
<name>RL13_RICBR</name>
<feature type="chain" id="PRO_0000272380" description="Large ribosomal subunit protein uL13">
    <location>
        <begin position="1"/>
        <end position="155"/>
    </location>
</feature>
<gene>
    <name evidence="1" type="primary">rplM</name>
    <name type="ordered locus">RBE_0224</name>
</gene>
<comment type="function">
    <text evidence="1">This protein is one of the early assembly proteins of the 50S ribosomal subunit, although it is not seen to bind rRNA by itself. It is important during the early stages of 50S assembly.</text>
</comment>
<comment type="subunit">
    <text evidence="1">Part of the 50S ribosomal subunit.</text>
</comment>
<comment type="similarity">
    <text evidence="1">Belongs to the universal ribosomal protein uL13 family.</text>
</comment>
<keyword id="KW-0687">Ribonucleoprotein</keyword>
<keyword id="KW-0689">Ribosomal protein</keyword>
<evidence type="ECO:0000255" key="1">
    <source>
        <dbReference type="HAMAP-Rule" id="MF_01366"/>
    </source>
</evidence>
<evidence type="ECO:0000305" key="2"/>
<reference key="1">
    <citation type="journal article" date="2006" name="PLoS Genet.">
        <title>Genome sequence of Rickettsia bellii illuminates the role of amoebae in gene exchanges between intracellular pathogens.</title>
        <authorList>
            <person name="Ogata H."/>
            <person name="La Scola B."/>
            <person name="Audic S."/>
            <person name="Renesto P."/>
            <person name="Blanc G."/>
            <person name="Robert C."/>
            <person name="Fournier P.-E."/>
            <person name="Claverie J.-M."/>
            <person name="Raoult D."/>
        </authorList>
    </citation>
    <scope>NUCLEOTIDE SEQUENCE [LARGE SCALE GENOMIC DNA]</scope>
    <source>
        <strain>RML369-C</strain>
    </source>
</reference>
<sequence>MKTYSAKPSEIEKKWWVIDAKNVVLGRLASRVANMLRGKHKPSFTPHMDCGDNIIIINAEHVTLTGKKANPKDGKIYYRHTGFPGGIKDTTAGKILSGKHPERVIKMAVKRMITRNALGAKQMSNLYIYANSEHPHAGQQPVVYDFASQNPKNKK</sequence>
<organism>
    <name type="scientific">Rickettsia bellii (strain RML369-C)</name>
    <dbReference type="NCBI Taxonomy" id="336407"/>
    <lineage>
        <taxon>Bacteria</taxon>
        <taxon>Pseudomonadati</taxon>
        <taxon>Pseudomonadota</taxon>
        <taxon>Alphaproteobacteria</taxon>
        <taxon>Rickettsiales</taxon>
        <taxon>Rickettsiaceae</taxon>
        <taxon>Rickettsieae</taxon>
        <taxon>Rickettsia</taxon>
        <taxon>belli group</taxon>
    </lineage>
</organism>
<protein>
    <recommendedName>
        <fullName evidence="1">Large ribosomal subunit protein uL13</fullName>
    </recommendedName>
    <alternativeName>
        <fullName evidence="2">50S ribosomal protein L13</fullName>
    </alternativeName>
</protein>